<accession>Q66G93</accession>
<reference key="1">
    <citation type="journal article" date="2004" name="Proc. Natl. Acad. Sci. U.S.A.">
        <title>Insights into the evolution of Yersinia pestis through whole-genome comparison with Yersinia pseudotuberculosis.</title>
        <authorList>
            <person name="Chain P.S.G."/>
            <person name="Carniel E."/>
            <person name="Larimer F.W."/>
            <person name="Lamerdin J."/>
            <person name="Stoutland P.O."/>
            <person name="Regala W.M."/>
            <person name="Georgescu A.M."/>
            <person name="Vergez L.M."/>
            <person name="Land M.L."/>
            <person name="Motin V.L."/>
            <person name="Brubaker R.R."/>
            <person name="Fowler J."/>
            <person name="Hinnebusch J."/>
            <person name="Marceau M."/>
            <person name="Medigue C."/>
            <person name="Simonet M."/>
            <person name="Chenal-Francisque V."/>
            <person name="Souza B."/>
            <person name="Dacheux D."/>
            <person name="Elliott J.M."/>
            <person name="Derbise A."/>
            <person name="Hauser L.J."/>
            <person name="Garcia E."/>
        </authorList>
    </citation>
    <scope>NUCLEOTIDE SEQUENCE [LARGE SCALE GENOMIC DNA]</scope>
    <source>
        <strain>IP32953</strain>
    </source>
</reference>
<keyword id="KW-0131">Cell cycle</keyword>
<keyword id="KW-0132">Cell division</keyword>
<keyword id="KW-0175">Coiled coil</keyword>
<keyword id="KW-0963">Cytoplasm</keyword>
<keyword id="KW-0717">Septation</keyword>
<protein>
    <recommendedName>
        <fullName evidence="1">Cell division protein ZapB</fullName>
    </recommendedName>
</protein>
<feature type="chain" id="PRO_0000333950" description="Cell division protein ZapB">
    <location>
        <begin position="1"/>
        <end position="79"/>
    </location>
</feature>
<feature type="coiled-coil region" evidence="1">
    <location>
        <begin position="6"/>
        <end position="78"/>
    </location>
</feature>
<sequence>MSFEVFEKLEVKVQQAIDTITLLQMEIEELKEKNNTLTQEVQDAAGSREALVRENEQLKQEQHVWQDRLRALLGKMEEV</sequence>
<dbReference type="EMBL" id="BX936398">
    <property type="protein sequence ID" value="CAH19329.1"/>
    <property type="molecule type" value="Genomic_DNA"/>
</dbReference>
<dbReference type="RefSeq" id="WP_002208953.1">
    <property type="nucleotide sequence ID" value="NZ_CP009712.1"/>
</dbReference>
<dbReference type="SMR" id="Q66G93"/>
<dbReference type="GeneID" id="96663567"/>
<dbReference type="KEGG" id="ypo:BZ17_2507"/>
<dbReference type="KEGG" id="yps:YPTB0089"/>
<dbReference type="PATRIC" id="fig|273123.14.peg.2630"/>
<dbReference type="Proteomes" id="UP000001011">
    <property type="component" value="Chromosome"/>
</dbReference>
<dbReference type="GO" id="GO:0005737">
    <property type="term" value="C:cytoplasm"/>
    <property type="evidence" value="ECO:0007669"/>
    <property type="project" value="UniProtKB-SubCell"/>
</dbReference>
<dbReference type="GO" id="GO:0000917">
    <property type="term" value="P:division septum assembly"/>
    <property type="evidence" value="ECO:0007669"/>
    <property type="project" value="UniProtKB-KW"/>
</dbReference>
<dbReference type="GO" id="GO:0043093">
    <property type="term" value="P:FtsZ-dependent cytokinesis"/>
    <property type="evidence" value="ECO:0007669"/>
    <property type="project" value="UniProtKB-UniRule"/>
</dbReference>
<dbReference type="Gene3D" id="1.20.5.340">
    <property type="match status" value="1"/>
</dbReference>
<dbReference type="HAMAP" id="MF_01196">
    <property type="entry name" value="ZapB"/>
    <property type="match status" value="1"/>
</dbReference>
<dbReference type="InterPro" id="IPR009252">
    <property type="entry name" value="Cell_div_ZapB"/>
</dbReference>
<dbReference type="NCBIfam" id="NF011951">
    <property type="entry name" value="PRK15422.1"/>
    <property type="match status" value="1"/>
</dbReference>
<dbReference type="Pfam" id="PF06005">
    <property type="entry name" value="ZapB"/>
    <property type="match status" value="1"/>
</dbReference>
<proteinExistence type="inferred from homology"/>
<organism>
    <name type="scientific">Yersinia pseudotuberculosis serotype I (strain IP32953)</name>
    <dbReference type="NCBI Taxonomy" id="273123"/>
    <lineage>
        <taxon>Bacteria</taxon>
        <taxon>Pseudomonadati</taxon>
        <taxon>Pseudomonadota</taxon>
        <taxon>Gammaproteobacteria</taxon>
        <taxon>Enterobacterales</taxon>
        <taxon>Yersiniaceae</taxon>
        <taxon>Yersinia</taxon>
    </lineage>
</organism>
<gene>
    <name evidence="1" type="primary">zapB</name>
    <name type="ordered locus">YPTB0089</name>
</gene>
<evidence type="ECO:0000255" key="1">
    <source>
        <dbReference type="HAMAP-Rule" id="MF_01196"/>
    </source>
</evidence>
<comment type="function">
    <text evidence="1">Non-essential, abundant cell division factor that is required for proper Z-ring formation. It is recruited early to the divisome by direct interaction with FtsZ, stimulating Z-ring assembly and thereby promoting cell division earlier in the cell cycle. Its recruitment to the Z-ring requires functional FtsA or ZipA.</text>
</comment>
<comment type="subunit">
    <text evidence="1">Homodimer. The ends of the coiled-coil dimer bind to each other, forming polymers. Interacts with FtsZ.</text>
</comment>
<comment type="subcellular location">
    <subcellularLocation>
        <location>Cytoplasm</location>
    </subcellularLocation>
    <text evidence="1">Localizes to the septum at mid-cell, in a FtsZ-like pattern.</text>
</comment>
<comment type="similarity">
    <text evidence="1">Belongs to the ZapB family.</text>
</comment>
<name>ZAPB_YERPS</name>